<organism>
    <name type="scientific">Vitis rotundifolia</name>
    <name type="common">Muscadine grape</name>
    <dbReference type="NCBI Taxonomy" id="103349"/>
    <lineage>
        <taxon>Eukaryota</taxon>
        <taxon>Viridiplantae</taxon>
        <taxon>Streptophyta</taxon>
        <taxon>Embryophyta</taxon>
        <taxon>Tracheophyta</taxon>
        <taxon>Spermatophyta</taxon>
        <taxon>Magnoliopsida</taxon>
        <taxon>eudicotyledons</taxon>
        <taxon>Gunneridae</taxon>
        <taxon>Pentapetalae</taxon>
        <taxon>rosids</taxon>
        <taxon>Vitales</taxon>
        <taxon>Vitaceae</taxon>
        <taxon>Viteae</taxon>
        <taxon>Vitis</taxon>
    </lineage>
</organism>
<accession>P86102</accession>
<sequence>NIFNAISAAGLGNQIKVSTAIDTGVLGTSYPPSK</sequence>
<keyword id="KW-0903">Direct protein sequencing</keyword>
<keyword id="KW-0326">Glycosidase</keyword>
<keyword id="KW-0378">Hydrolase</keyword>
<keyword id="KW-0611">Plant defense</keyword>
<feature type="chain" id="PRO_0000358869" description="Glucan endo-1,3-beta-glucosidase">
    <location>
        <begin position="1" status="less than"/>
        <end position="34" status="greater than"/>
    </location>
</feature>
<feature type="non-terminal residue">
    <location>
        <position position="1"/>
    </location>
</feature>
<feature type="non-terminal residue">
    <location>
        <position position="34"/>
    </location>
</feature>
<dbReference type="EC" id="3.2.1.39"/>
<dbReference type="SMR" id="P86102"/>
<dbReference type="GO" id="GO:0042973">
    <property type="term" value="F:glucan endo-1,3-beta-D-glucosidase activity"/>
    <property type="evidence" value="ECO:0007669"/>
    <property type="project" value="UniProtKB-EC"/>
</dbReference>
<dbReference type="GO" id="GO:0005975">
    <property type="term" value="P:carbohydrate metabolic process"/>
    <property type="evidence" value="ECO:0007669"/>
    <property type="project" value="InterPro"/>
</dbReference>
<dbReference type="GO" id="GO:0006952">
    <property type="term" value="P:defense response"/>
    <property type="evidence" value="ECO:0007669"/>
    <property type="project" value="UniProtKB-KW"/>
</dbReference>
<dbReference type="Gene3D" id="3.20.20.80">
    <property type="entry name" value="Glycosidases"/>
    <property type="match status" value="1"/>
</dbReference>
<dbReference type="InterPro" id="IPR000490">
    <property type="entry name" value="Glyco_hydro_17"/>
</dbReference>
<dbReference type="Pfam" id="PF00332">
    <property type="entry name" value="Glyco_hydro_17"/>
    <property type="match status" value="1"/>
</dbReference>
<proteinExistence type="evidence at protein level"/>
<protein>
    <recommendedName>
        <fullName evidence="1">Glucan endo-1,3-beta-glucosidase</fullName>
        <ecNumber>3.2.1.39</ecNumber>
    </recommendedName>
    <alternativeName>
        <fullName evidence="1">(1-&gt;3)-beta-glucan endohydrolase</fullName>
        <shortName evidence="1">(1-&gt;3)-beta-glucanase</shortName>
    </alternativeName>
    <alternativeName>
        <fullName evidence="1">Beta-1,3-endoglucanase</fullName>
    </alternativeName>
</protein>
<reference key="1">
    <citation type="journal article" date="2010" name="Appl. Biochem. Biotechnol.">
        <title>Proteomics approach to identify unique xylem sap proteins in Pierce's disease-tolerant Vitis species.</title>
        <authorList>
            <person name="Basha S.M."/>
            <person name="Mazhar H."/>
            <person name="Vasanthaiah H.K.N."/>
        </authorList>
    </citation>
    <scope>PROTEIN SEQUENCE</scope>
    <source>
        <tissue>Xylem</tissue>
    </source>
</reference>
<evidence type="ECO:0000250" key="1">
    <source>
        <dbReference type="UniProtKB" id="Q03773"/>
    </source>
</evidence>
<evidence type="ECO:0000255" key="2"/>
<evidence type="ECO:0000305" key="3"/>
<comment type="function">
    <text evidence="3">Is thought to be an important plant defense-related product against fungal pathogens.</text>
</comment>
<comment type="catalytic activity">
    <reaction evidence="1">
        <text>Hydrolysis of (1-&gt;3)-beta-D-glucosidic linkages in (1-&gt;3)-beta-D-glucans.</text>
        <dbReference type="EC" id="3.2.1.39"/>
    </reaction>
</comment>
<comment type="miscellaneous">
    <text>On the 2D-gel the determined pI of this protein is: 6, its MW is: 25 kDa.</text>
</comment>
<comment type="similarity">
    <text evidence="2">Belongs to the glycosyl hydrolase 17 family.</text>
</comment>
<name>E13B_VITRO</name>